<name>TIG_DESAP</name>
<accession>B1I4R5</accession>
<sequence>MKASAEKIDKNRVELQVEVEPERLDEVLNQAYRKLVRKANIPGFRPGKAPRPVFERFYGKQSLYEEAMEQLIPRAYLEAVADTGIQPVSQPEVDVVQLEEGKPVILKIQVDVKPEVVLGEYKNLKVERQVAEVSDSEVDEELEKLRNRYAKLVTIEEGTVEMGDIITIDYEGTINGEPFAGGSATDRSVEVGKGFVAKDFDAHLVGMSTGETREIPLSIPEDFPNKEVAGKEALITVTVKEIKRKELADLDDEFAKDVSEHDTLEALRAETRKKLENAAEKKIEYVMRNALISEAVAGAEVEVPASMVDARLETMMEEVLRPVIEQGMTKEDFFKLTNQTEESMRADIRPRAEESLKKELVIDRIAEVEGLEATEEEVDAELAKMAEFYRLEADRLREILEQRNDLDSIRTAIKRDKAVDLLVANAEIVGQESTEAEK</sequence>
<dbReference type="EC" id="5.2.1.8" evidence="1"/>
<dbReference type="EMBL" id="CP000860">
    <property type="protein sequence ID" value="ACA59986.1"/>
    <property type="molecule type" value="Genomic_DNA"/>
</dbReference>
<dbReference type="RefSeq" id="WP_012302571.1">
    <property type="nucleotide sequence ID" value="NC_010424.1"/>
</dbReference>
<dbReference type="SMR" id="B1I4R5"/>
<dbReference type="STRING" id="477974.Daud_1480"/>
<dbReference type="KEGG" id="dau:Daud_1480"/>
<dbReference type="eggNOG" id="COG0544">
    <property type="taxonomic scope" value="Bacteria"/>
</dbReference>
<dbReference type="HOGENOM" id="CLU_033058_3_2_9"/>
<dbReference type="OrthoDB" id="9767721at2"/>
<dbReference type="Proteomes" id="UP000008544">
    <property type="component" value="Chromosome"/>
</dbReference>
<dbReference type="GO" id="GO:0005737">
    <property type="term" value="C:cytoplasm"/>
    <property type="evidence" value="ECO:0007669"/>
    <property type="project" value="UniProtKB-SubCell"/>
</dbReference>
<dbReference type="GO" id="GO:0003755">
    <property type="term" value="F:peptidyl-prolyl cis-trans isomerase activity"/>
    <property type="evidence" value="ECO:0007669"/>
    <property type="project" value="UniProtKB-UniRule"/>
</dbReference>
<dbReference type="GO" id="GO:0044183">
    <property type="term" value="F:protein folding chaperone"/>
    <property type="evidence" value="ECO:0007669"/>
    <property type="project" value="TreeGrafter"/>
</dbReference>
<dbReference type="GO" id="GO:0043022">
    <property type="term" value="F:ribosome binding"/>
    <property type="evidence" value="ECO:0007669"/>
    <property type="project" value="TreeGrafter"/>
</dbReference>
<dbReference type="GO" id="GO:0051083">
    <property type="term" value="P:'de novo' cotranslational protein folding"/>
    <property type="evidence" value="ECO:0007669"/>
    <property type="project" value="TreeGrafter"/>
</dbReference>
<dbReference type="GO" id="GO:0051301">
    <property type="term" value="P:cell division"/>
    <property type="evidence" value="ECO:0007669"/>
    <property type="project" value="UniProtKB-KW"/>
</dbReference>
<dbReference type="GO" id="GO:0061077">
    <property type="term" value="P:chaperone-mediated protein folding"/>
    <property type="evidence" value="ECO:0007669"/>
    <property type="project" value="TreeGrafter"/>
</dbReference>
<dbReference type="GO" id="GO:0015031">
    <property type="term" value="P:protein transport"/>
    <property type="evidence" value="ECO:0007669"/>
    <property type="project" value="UniProtKB-UniRule"/>
</dbReference>
<dbReference type="GO" id="GO:0043335">
    <property type="term" value="P:protein unfolding"/>
    <property type="evidence" value="ECO:0007669"/>
    <property type="project" value="TreeGrafter"/>
</dbReference>
<dbReference type="FunFam" id="3.10.50.40:FF:000001">
    <property type="entry name" value="Trigger factor"/>
    <property type="match status" value="1"/>
</dbReference>
<dbReference type="Gene3D" id="3.10.50.40">
    <property type="match status" value="1"/>
</dbReference>
<dbReference type="Gene3D" id="3.30.70.1050">
    <property type="entry name" value="Trigger factor ribosome-binding domain"/>
    <property type="match status" value="1"/>
</dbReference>
<dbReference type="Gene3D" id="1.10.3120.10">
    <property type="entry name" value="Trigger factor, C-terminal domain"/>
    <property type="match status" value="1"/>
</dbReference>
<dbReference type="HAMAP" id="MF_00303">
    <property type="entry name" value="Trigger_factor_Tig"/>
    <property type="match status" value="1"/>
</dbReference>
<dbReference type="InterPro" id="IPR046357">
    <property type="entry name" value="PPIase_dom_sf"/>
</dbReference>
<dbReference type="InterPro" id="IPR001179">
    <property type="entry name" value="PPIase_FKBP_dom"/>
</dbReference>
<dbReference type="InterPro" id="IPR005215">
    <property type="entry name" value="Trig_fac"/>
</dbReference>
<dbReference type="InterPro" id="IPR008880">
    <property type="entry name" value="Trigger_fac_C"/>
</dbReference>
<dbReference type="InterPro" id="IPR037041">
    <property type="entry name" value="Trigger_fac_C_sf"/>
</dbReference>
<dbReference type="InterPro" id="IPR008881">
    <property type="entry name" value="Trigger_fac_ribosome-bd_bac"/>
</dbReference>
<dbReference type="InterPro" id="IPR036611">
    <property type="entry name" value="Trigger_fac_ribosome-bd_sf"/>
</dbReference>
<dbReference type="InterPro" id="IPR027304">
    <property type="entry name" value="Trigger_fact/SurA_dom_sf"/>
</dbReference>
<dbReference type="NCBIfam" id="TIGR00115">
    <property type="entry name" value="tig"/>
    <property type="match status" value="1"/>
</dbReference>
<dbReference type="PANTHER" id="PTHR30560">
    <property type="entry name" value="TRIGGER FACTOR CHAPERONE AND PEPTIDYL-PROLYL CIS/TRANS ISOMERASE"/>
    <property type="match status" value="1"/>
</dbReference>
<dbReference type="PANTHER" id="PTHR30560:SF3">
    <property type="entry name" value="TRIGGER FACTOR-LIKE PROTEIN TIG, CHLOROPLASTIC"/>
    <property type="match status" value="1"/>
</dbReference>
<dbReference type="Pfam" id="PF00254">
    <property type="entry name" value="FKBP_C"/>
    <property type="match status" value="1"/>
</dbReference>
<dbReference type="Pfam" id="PF05698">
    <property type="entry name" value="Trigger_C"/>
    <property type="match status" value="1"/>
</dbReference>
<dbReference type="Pfam" id="PF05697">
    <property type="entry name" value="Trigger_N"/>
    <property type="match status" value="1"/>
</dbReference>
<dbReference type="PIRSF" id="PIRSF003095">
    <property type="entry name" value="Trigger_factor"/>
    <property type="match status" value="1"/>
</dbReference>
<dbReference type="SUPFAM" id="SSF54534">
    <property type="entry name" value="FKBP-like"/>
    <property type="match status" value="1"/>
</dbReference>
<dbReference type="SUPFAM" id="SSF109998">
    <property type="entry name" value="Triger factor/SurA peptide-binding domain-like"/>
    <property type="match status" value="1"/>
</dbReference>
<dbReference type="SUPFAM" id="SSF102735">
    <property type="entry name" value="Trigger factor ribosome-binding domain"/>
    <property type="match status" value="1"/>
</dbReference>
<dbReference type="PROSITE" id="PS50059">
    <property type="entry name" value="FKBP_PPIASE"/>
    <property type="match status" value="1"/>
</dbReference>
<protein>
    <recommendedName>
        <fullName evidence="1">Trigger factor</fullName>
        <shortName evidence="1">TF</shortName>
        <ecNumber evidence="1">5.2.1.8</ecNumber>
    </recommendedName>
    <alternativeName>
        <fullName evidence="1">PPIase</fullName>
    </alternativeName>
</protein>
<keyword id="KW-0131">Cell cycle</keyword>
<keyword id="KW-0132">Cell division</keyword>
<keyword id="KW-0143">Chaperone</keyword>
<keyword id="KW-0963">Cytoplasm</keyword>
<keyword id="KW-0413">Isomerase</keyword>
<keyword id="KW-1185">Reference proteome</keyword>
<keyword id="KW-0697">Rotamase</keyword>
<reference key="1">
    <citation type="submission" date="2007-10" db="EMBL/GenBank/DDBJ databases">
        <title>Complete sequence of chromosome of Desulforudis audaxviator MP104C.</title>
        <authorList>
            <person name="Copeland A."/>
            <person name="Lucas S."/>
            <person name="Lapidus A."/>
            <person name="Barry K."/>
            <person name="Glavina del Rio T."/>
            <person name="Dalin E."/>
            <person name="Tice H."/>
            <person name="Bruce D."/>
            <person name="Pitluck S."/>
            <person name="Lowry S.R."/>
            <person name="Larimer F."/>
            <person name="Land M.L."/>
            <person name="Hauser L."/>
            <person name="Kyrpides N."/>
            <person name="Ivanova N.N."/>
            <person name="Richardson P."/>
        </authorList>
    </citation>
    <scope>NUCLEOTIDE SEQUENCE [LARGE SCALE GENOMIC DNA]</scope>
    <source>
        <strain>MP104C</strain>
    </source>
</reference>
<comment type="function">
    <text evidence="1">Involved in protein export. Acts as a chaperone by maintaining the newly synthesized protein in an open conformation. Functions as a peptidyl-prolyl cis-trans isomerase.</text>
</comment>
<comment type="catalytic activity">
    <reaction evidence="1">
        <text>[protein]-peptidylproline (omega=180) = [protein]-peptidylproline (omega=0)</text>
        <dbReference type="Rhea" id="RHEA:16237"/>
        <dbReference type="Rhea" id="RHEA-COMP:10747"/>
        <dbReference type="Rhea" id="RHEA-COMP:10748"/>
        <dbReference type="ChEBI" id="CHEBI:83833"/>
        <dbReference type="ChEBI" id="CHEBI:83834"/>
        <dbReference type="EC" id="5.2.1.8"/>
    </reaction>
</comment>
<comment type="subcellular location">
    <subcellularLocation>
        <location>Cytoplasm</location>
    </subcellularLocation>
    <text evidence="1">About half TF is bound to the ribosome near the polypeptide exit tunnel while the other half is free in the cytoplasm.</text>
</comment>
<comment type="domain">
    <text evidence="1">Consists of 3 domains; the N-terminus binds the ribosome, the middle domain has PPIase activity, while the C-terminus has intrinsic chaperone activity on its own.</text>
</comment>
<comment type="similarity">
    <text evidence="1">Belongs to the FKBP-type PPIase family. Tig subfamily.</text>
</comment>
<feature type="chain" id="PRO_1000115528" description="Trigger factor">
    <location>
        <begin position="1"/>
        <end position="438"/>
    </location>
</feature>
<feature type="domain" description="PPIase FKBP-type" evidence="1">
    <location>
        <begin position="163"/>
        <end position="248"/>
    </location>
</feature>
<proteinExistence type="inferred from homology"/>
<evidence type="ECO:0000255" key="1">
    <source>
        <dbReference type="HAMAP-Rule" id="MF_00303"/>
    </source>
</evidence>
<gene>
    <name evidence="1" type="primary">tig</name>
    <name type="ordered locus">Daud_1480</name>
</gene>
<organism>
    <name type="scientific">Desulforudis audaxviator (strain MP104C)</name>
    <dbReference type="NCBI Taxonomy" id="477974"/>
    <lineage>
        <taxon>Bacteria</taxon>
        <taxon>Bacillati</taxon>
        <taxon>Bacillota</taxon>
        <taxon>Clostridia</taxon>
        <taxon>Thermoanaerobacterales</taxon>
        <taxon>Candidatus Desulforudaceae</taxon>
        <taxon>Candidatus Desulforudis</taxon>
    </lineage>
</organism>